<accession>Q1LSL2</accession>
<keyword id="KW-0963">Cytoplasm</keyword>
<keyword id="KW-0460">Magnesium</keyword>
<keyword id="KW-0479">Metal-binding</keyword>
<keyword id="KW-0548">Nucleotidyltransferase</keyword>
<keyword id="KW-1185">Reference proteome</keyword>
<keyword id="KW-0694">RNA-binding</keyword>
<keyword id="KW-0808">Transferase</keyword>
<protein>
    <recommendedName>
        <fullName evidence="1">Polyribonucleotide nucleotidyltransferase</fullName>
        <ecNumber evidence="1">2.7.7.8</ecNumber>
    </recommendedName>
    <alternativeName>
        <fullName evidence="1">Polynucleotide phosphorylase</fullName>
        <shortName evidence="1">PNPase</shortName>
    </alternativeName>
</protein>
<name>PNP_BAUCH</name>
<feature type="chain" id="PRO_0000329529" description="Polyribonucleotide nucleotidyltransferase">
    <location>
        <begin position="1"/>
        <end position="697"/>
    </location>
</feature>
<feature type="domain" description="KH" evidence="1">
    <location>
        <begin position="553"/>
        <end position="612"/>
    </location>
</feature>
<feature type="domain" description="S1 motif" evidence="1">
    <location>
        <begin position="622"/>
        <end position="690"/>
    </location>
</feature>
<feature type="binding site" evidence="1">
    <location>
        <position position="486"/>
    </location>
    <ligand>
        <name>Mg(2+)</name>
        <dbReference type="ChEBI" id="CHEBI:18420"/>
    </ligand>
</feature>
<feature type="binding site" evidence="1">
    <location>
        <position position="492"/>
    </location>
    <ligand>
        <name>Mg(2+)</name>
        <dbReference type="ChEBI" id="CHEBI:18420"/>
    </ligand>
</feature>
<comment type="function">
    <text evidence="1">Involved in mRNA degradation. Catalyzes the phosphorolysis of single-stranded polyribonucleotides processively in the 3'- to 5'-direction.</text>
</comment>
<comment type="catalytic activity">
    <reaction evidence="1">
        <text>RNA(n+1) + phosphate = RNA(n) + a ribonucleoside 5'-diphosphate</text>
        <dbReference type="Rhea" id="RHEA:22096"/>
        <dbReference type="Rhea" id="RHEA-COMP:14527"/>
        <dbReference type="Rhea" id="RHEA-COMP:17342"/>
        <dbReference type="ChEBI" id="CHEBI:43474"/>
        <dbReference type="ChEBI" id="CHEBI:57930"/>
        <dbReference type="ChEBI" id="CHEBI:140395"/>
        <dbReference type="EC" id="2.7.7.8"/>
    </reaction>
</comment>
<comment type="cofactor">
    <cofactor evidence="1">
        <name>Mg(2+)</name>
        <dbReference type="ChEBI" id="CHEBI:18420"/>
    </cofactor>
</comment>
<comment type="subunit">
    <text evidence="1">Component of the RNA degradosome, which is a multiprotein complex involved in RNA processing and mRNA degradation.</text>
</comment>
<comment type="subcellular location">
    <subcellularLocation>
        <location evidence="1">Cytoplasm</location>
    </subcellularLocation>
</comment>
<comment type="similarity">
    <text evidence="1">Belongs to the polyribonucleotide nucleotidyltransferase family.</text>
</comment>
<reference key="1">
    <citation type="journal article" date="2006" name="PLoS Biol.">
        <title>Metabolic complementarity and genomics of the dual bacterial symbiosis of sharpshooters.</title>
        <authorList>
            <person name="Wu D."/>
            <person name="Daugherty S.C."/>
            <person name="Van Aken S.E."/>
            <person name="Pai G.H."/>
            <person name="Watkins K.L."/>
            <person name="Khouri H."/>
            <person name="Tallon L.J."/>
            <person name="Zaborsky J.M."/>
            <person name="Dunbar H.E."/>
            <person name="Tran P.L."/>
            <person name="Moran N.A."/>
            <person name="Eisen J.A."/>
        </authorList>
    </citation>
    <scope>NUCLEOTIDE SEQUENCE [LARGE SCALE GENOMIC DNA]</scope>
</reference>
<organism>
    <name type="scientific">Baumannia cicadellinicola subsp. Homalodisca coagulata</name>
    <dbReference type="NCBI Taxonomy" id="374463"/>
    <lineage>
        <taxon>Bacteria</taxon>
        <taxon>Pseudomonadati</taxon>
        <taxon>Pseudomonadota</taxon>
        <taxon>Gammaproteobacteria</taxon>
        <taxon>Candidatus Palibaumannia</taxon>
    </lineage>
</organism>
<sequence length="697" mass="76711">MLNPIVHRFQYGKHIVILETGIVARQATAAVMVNMADTIVLVTVVGVKQVKPGQKFFPLMVNYQERTYAAGRFPGGFFRREGRPSEGEILISRMIDRPLRPLFPDGFLNEVQVIATVVSINPQVSPDIVAMIGVSAALSISGIPFNCPFGAARVGYINNQYVLNPTIAELVDSSLDLVVASTANAVLMVESEAKQLSEEQMLSAIIFGHEQQQLVIQNINHMVTIVGKPKWSWQAQVIDTNLQLCVTELAESRLNEAFCISDKQERDVCIETIKSDVLSALQQKNETIEEETISNIFANLEKQIARNRILGGKLRIDGRNHKMIRSLDMRTSILPRTHGSALFVRGETQALVTVTLGTERNAQNIDELIGERTDRFLLHYNFPPYCVGEIGLVGSPKRREIGHGRLAKRGILAVMPTANEFPYTVRVVSEITESNGSSSMASVCGTSLALMDAGVPIKAAVAGVAMGLIKEDNNFVILSDILSNEDYIGDMDFKVAGSKNGITALQMDIKTKGITNNIIQLALNQAKDARMHILNMMEQVISMSRTDISPFAPRIHTIKIHPDKIKDVIGKCGSVIRALTEETKTIIDIEDDGTVTVAATDSIKAQQAICRIKDITAEIEVGSIYHGKVTRIVDFGAFIAISSNKEGLVHISQITNKRVEKVADYLSIDQIVLVKVLEVDRQGRIRLSMKDTNLTNK</sequence>
<proteinExistence type="inferred from homology"/>
<gene>
    <name evidence="1" type="primary">pnp</name>
    <name type="ordered locus">BCI_0627</name>
</gene>
<dbReference type="EC" id="2.7.7.8" evidence="1"/>
<dbReference type="EMBL" id="CP000238">
    <property type="protein sequence ID" value="ABF13852.1"/>
    <property type="molecule type" value="Genomic_DNA"/>
</dbReference>
<dbReference type="RefSeq" id="WP_011520785.1">
    <property type="nucleotide sequence ID" value="NC_007984.1"/>
</dbReference>
<dbReference type="SMR" id="Q1LSL2"/>
<dbReference type="STRING" id="374463.BCI_0627"/>
<dbReference type="KEGG" id="bci:BCI_0627"/>
<dbReference type="HOGENOM" id="CLU_004217_2_2_6"/>
<dbReference type="OrthoDB" id="9804305at2"/>
<dbReference type="Proteomes" id="UP000002427">
    <property type="component" value="Chromosome"/>
</dbReference>
<dbReference type="GO" id="GO:0005829">
    <property type="term" value="C:cytosol"/>
    <property type="evidence" value="ECO:0007669"/>
    <property type="project" value="TreeGrafter"/>
</dbReference>
<dbReference type="GO" id="GO:0000175">
    <property type="term" value="F:3'-5'-RNA exonuclease activity"/>
    <property type="evidence" value="ECO:0007669"/>
    <property type="project" value="TreeGrafter"/>
</dbReference>
<dbReference type="GO" id="GO:0000287">
    <property type="term" value="F:magnesium ion binding"/>
    <property type="evidence" value="ECO:0007669"/>
    <property type="project" value="UniProtKB-UniRule"/>
</dbReference>
<dbReference type="GO" id="GO:0004654">
    <property type="term" value="F:polyribonucleotide nucleotidyltransferase activity"/>
    <property type="evidence" value="ECO:0007669"/>
    <property type="project" value="UniProtKB-UniRule"/>
</dbReference>
<dbReference type="GO" id="GO:0003723">
    <property type="term" value="F:RNA binding"/>
    <property type="evidence" value="ECO:0007669"/>
    <property type="project" value="UniProtKB-UniRule"/>
</dbReference>
<dbReference type="GO" id="GO:0006402">
    <property type="term" value="P:mRNA catabolic process"/>
    <property type="evidence" value="ECO:0007669"/>
    <property type="project" value="UniProtKB-UniRule"/>
</dbReference>
<dbReference type="GO" id="GO:0006396">
    <property type="term" value="P:RNA processing"/>
    <property type="evidence" value="ECO:0007669"/>
    <property type="project" value="InterPro"/>
</dbReference>
<dbReference type="CDD" id="cd02393">
    <property type="entry name" value="KH-I_PNPase"/>
    <property type="match status" value="1"/>
</dbReference>
<dbReference type="CDD" id="cd11363">
    <property type="entry name" value="RNase_PH_PNPase_1"/>
    <property type="match status" value="1"/>
</dbReference>
<dbReference type="CDD" id="cd11364">
    <property type="entry name" value="RNase_PH_PNPase_2"/>
    <property type="match status" value="1"/>
</dbReference>
<dbReference type="CDD" id="cd04472">
    <property type="entry name" value="S1_PNPase"/>
    <property type="match status" value="1"/>
</dbReference>
<dbReference type="FunFam" id="2.40.50.140:FF:000023">
    <property type="entry name" value="Polyribonucleotide nucleotidyltransferase"/>
    <property type="match status" value="1"/>
</dbReference>
<dbReference type="FunFam" id="3.30.1370.10:FF:000001">
    <property type="entry name" value="Polyribonucleotide nucleotidyltransferase"/>
    <property type="match status" value="1"/>
</dbReference>
<dbReference type="FunFam" id="3.30.230.70:FF:000001">
    <property type="entry name" value="Polyribonucleotide nucleotidyltransferase"/>
    <property type="match status" value="1"/>
</dbReference>
<dbReference type="FunFam" id="3.30.230.70:FF:000002">
    <property type="entry name" value="Polyribonucleotide nucleotidyltransferase"/>
    <property type="match status" value="1"/>
</dbReference>
<dbReference type="Gene3D" id="3.30.230.70">
    <property type="entry name" value="GHMP Kinase, N-terminal domain"/>
    <property type="match status" value="2"/>
</dbReference>
<dbReference type="Gene3D" id="3.30.1370.10">
    <property type="entry name" value="K Homology domain, type 1"/>
    <property type="match status" value="1"/>
</dbReference>
<dbReference type="Gene3D" id="2.40.50.140">
    <property type="entry name" value="Nucleic acid-binding proteins"/>
    <property type="match status" value="1"/>
</dbReference>
<dbReference type="HAMAP" id="MF_01595">
    <property type="entry name" value="PNPase"/>
    <property type="match status" value="1"/>
</dbReference>
<dbReference type="InterPro" id="IPR001247">
    <property type="entry name" value="ExoRNase_PH_dom1"/>
</dbReference>
<dbReference type="InterPro" id="IPR015847">
    <property type="entry name" value="ExoRNase_PH_dom2"/>
</dbReference>
<dbReference type="InterPro" id="IPR036345">
    <property type="entry name" value="ExoRNase_PH_dom2_sf"/>
</dbReference>
<dbReference type="InterPro" id="IPR004087">
    <property type="entry name" value="KH_dom"/>
</dbReference>
<dbReference type="InterPro" id="IPR004088">
    <property type="entry name" value="KH_dom_type_1"/>
</dbReference>
<dbReference type="InterPro" id="IPR036612">
    <property type="entry name" value="KH_dom_type_1_sf"/>
</dbReference>
<dbReference type="InterPro" id="IPR012340">
    <property type="entry name" value="NA-bd_OB-fold"/>
</dbReference>
<dbReference type="InterPro" id="IPR012162">
    <property type="entry name" value="PNPase"/>
</dbReference>
<dbReference type="InterPro" id="IPR027408">
    <property type="entry name" value="PNPase/RNase_PH_dom_sf"/>
</dbReference>
<dbReference type="InterPro" id="IPR015848">
    <property type="entry name" value="PNPase_PH_RNA-bd_bac/org-type"/>
</dbReference>
<dbReference type="InterPro" id="IPR036456">
    <property type="entry name" value="PNPase_PH_RNA-bd_sf"/>
</dbReference>
<dbReference type="InterPro" id="IPR020568">
    <property type="entry name" value="Ribosomal_Su5_D2-typ_SF"/>
</dbReference>
<dbReference type="InterPro" id="IPR003029">
    <property type="entry name" value="S1_domain"/>
</dbReference>
<dbReference type="NCBIfam" id="TIGR03591">
    <property type="entry name" value="polynuc_phos"/>
    <property type="match status" value="1"/>
</dbReference>
<dbReference type="NCBIfam" id="NF008805">
    <property type="entry name" value="PRK11824.1"/>
    <property type="match status" value="1"/>
</dbReference>
<dbReference type="PANTHER" id="PTHR11252">
    <property type="entry name" value="POLYRIBONUCLEOTIDE NUCLEOTIDYLTRANSFERASE"/>
    <property type="match status" value="1"/>
</dbReference>
<dbReference type="PANTHER" id="PTHR11252:SF0">
    <property type="entry name" value="POLYRIBONUCLEOTIDE NUCLEOTIDYLTRANSFERASE 1, MITOCHONDRIAL"/>
    <property type="match status" value="1"/>
</dbReference>
<dbReference type="Pfam" id="PF00013">
    <property type="entry name" value="KH_1"/>
    <property type="match status" value="1"/>
</dbReference>
<dbReference type="Pfam" id="PF03726">
    <property type="entry name" value="PNPase"/>
    <property type="match status" value="1"/>
</dbReference>
<dbReference type="Pfam" id="PF01138">
    <property type="entry name" value="RNase_PH"/>
    <property type="match status" value="2"/>
</dbReference>
<dbReference type="Pfam" id="PF03725">
    <property type="entry name" value="RNase_PH_C"/>
    <property type="match status" value="2"/>
</dbReference>
<dbReference type="Pfam" id="PF00575">
    <property type="entry name" value="S1"/>
    <property type="match status" value="1"/>
</dbReference>
<dbReference type="PIRSF" id="PIRSF005499">
    <property type="entry name" value="PNPase"/>
    <property type="match status" value="1"/>
</dbReference>
<dbReference type="SMART" id="SM00322">
    <property type="entry name" value="KH"/>
    <property type="match status" value="1"/>
</dbReference>
<dbReference type="SMART" id="SM00316">
    <property type="entry name" value="S1"/>
    <property type="match status" value="1"/>
</dbReference>
<dbReference type="SUPFAM" id="SSF54791">
    <property type="entry name" value="Eukaryotic type KH-domain (KH-domain type I)"/>
    <property type="match status" value="1"/>
</dbReference>
<dbReference type="SUPFAM" id="SSF50249">
    <property type="entry name" value="Nucleic acid-binding proteins"/>
    <property type="match status" value="1"/>
</dbReference>
<dbReference type="SUPFAM" id="SSF46915">
    <property type="entry name" value="Polynucleotide phosphorylase/guanosine pentaphosphate synthase (PNPase/GPSI), domain 3"/>
    <property type="match status" value="1"/>
</dbReference>
<dbReference type="SUPFAM" id="SSF55666">
    <property type="entry name" value="Ribonuclease PH domain 2-like"/>
    <property type="match status" value="2"/>
</dbReference>
<dbReference type="SUPFAM" id="SSF54211">
    <property type="entry name" value="Ribosomal protein S5 domain 2-like"/>
    <property type="match status" value="2"/>
</dbReference>
<dbReference type="PROSITE" id="PS50084">
    <property type="entry name" value="KH_TYPE_1"/>
    <property type="match status" value="1"/>
</dbReference>
<dbReference type="PROSITE" id="PS50126">
    <property type="entry name" value="S1"/>
    <property type="match status" value="1"/>
</dbReference>
<evidence type="ECO:0000255" key="1">
    <source>
        <dbReference type="HAMAP-Rule" id="MF_01595"/>
    </source>
</evidence>